<reference key="1">
    <citation type="journal article" date="2010" name="J. Bacteriol.">
        <title>Whole genome sequences of two Xylella fastidiosa strains (M12 and M23) causing almond leaf scorch disease in California.</title>
        <authorList>
            <person name="Chen J."/>
            <person name="Xie G."/>
            <person name="Han S."/>
            <person name="Chertkov O."/>
            <person name="Sims D."/>
            <person name="Civerolo E.L."/>
        </authorList>
    </citation>
    <scope>NUCLEOTIDE SEQUENCE [LARGE SCALE GENOMIC DNA]</scope>
    <source>
        <strain>M23</strain>
    </source>
</reference>
<gene>
    <name evidence="1" type="primary">lspA</name>
    <name type="ordered locus">XfasM23_1520</name>
</gene>
<proteinExistence type="inferred from homology"/>
<feature type="chain" id="PRO_1000097286" description="Lipoprotein signal peptidase">
    <location>
        <begin position="1"/>
        <end position="167"/>
    </location>
</feature>
<feature type="transmembrane region" description="Helical" evidence="1">
    <location>
        <begin position="10"/>
        <end position="30"/>
    </location>
</feature>
<feature type="transmembrane region" description="Helical" evidence="1">
    <location>
        <begin position="68"/>
        <end position="88"/>
    </location>
</feature>
<feature type="transmembrane region" description="Helical" evidence="1">
    <location>
        <begin position="98"/>
        <end position="118"/>
    </location>
</feature>
<feature type="transmembrane region" description="Helical" evidence="1">
    <location>
        <begin position="138"/>
        <end position="158"/>
    </location>
</feature>
<feature type="active site" evidence="1">
    <location>
        <position position="124"/>
    </location>
</feature>
<feature type="active site" evidence="1">
    <location>
        <position position="142"/>
    </location>
</feature>
<name>LSPA_XYLF2</name>
<comment type="function">
    <text evidence="1">This protein specifically catalyzes the removal of signal peptides from prolipoproteins.</text>
</comment>
<comment type="catalytic activity">
    <reaction evidence="1">
        <text>Release of signal peptides from bacterial membrane prolipoproteins. Hydrolyzes -Xaa-Yaa-Zaa-|-(S,diacylglyceryl)Cys-, in which Xaa is hydrophobic (preferably Leu), and Yaa (Ala or Ser) and Zaa (Gly or Ala) have small, neutral side chains.</text>
        <dbReference type="EC" id="3.4.23.36"/>
    </reaction>
</comment>
<comment type="pathway">
    <text evidence="1">Protein modification; lipoprotein biosynthesis (signal peptide cleavage).</text>
</comment>
<comment type="subcellular location">
    <subcellularLocation>
        <location evidence="1">Cell inner membrane</location>
        <topology evidence="1">Multi-pass membrane protein</topology>
    </subcellularLocation>
</comment>
<comment type="similarity">
    <text evidence="1">Belongs to the peptidase A8 family.</text>
</comment>
<organism>
    <name type="scientific">Xylella fastidiosa (strain M23)</name>
    <dbReference type="NCBI Taxonomy" id="405441"/>
    <lineage>
        <taxon>Bacteria</taxon>
        <taxon>Pseudomonadati</taxon>
        <taxon>Pseudomonadota</taxon>
        <taxon>Gammaproteobacteria</taxon>
        <taxon>Lysobacterales</taxon>
        <taxon>Lysobacteraceae</taxon>
        <taxon>Xylella</taxon>
    </lineage>
</organism>
<dbReference type="EC" id="3.4.23.36" evidence="1"/>
<dbReference type="EMBL" id="CP001011">
    <property type="protein sequence ID" value="ACB92928.1"/>
    <property type="molecule type" value="Genomic_DNA"/>
</dbReference>
<dbReference type="RefSeq" id="WP_004085935.1">
    <property type="nucleotide sequence ID" value="NC_010577.1"/>
</dbReference>
<dbReference type="SMR" id="B2I6V1"/>
<dbReference type="GeneID" id="93905257"/>
<dbReference type="KEGG" id="xfn:XfasM23_1520"/>
<dbReference type="HOGENOM" id="CLU_083252_4_0_6"/>
<dbReference type="UniPathway" id="UPA00665"/>
<dbReference type="Proteomes" id="UP000001698">
    <property type="component" value="Chromosome"/>
</dbReference>
<dbReference type="GO" id="GO:0005886">
    <property type="term" value="C:plasma membrane"/>
    <property type="evidence" value="ECO:0007669"/>
    <property type="project" value="UniProtKB-SubCell"/>
</dbReference>
<dbReference type="GO" id="GO:0004190">
    <property type="term" value="F:aspartic-type endopeptidase activity"/>
    <property type="evidence" value="ECO:0007669"/>
    <property type="project" value="UniProtKB-UniRule"/>
</dbReference>
<dbReference type="GO" id="GO:0006508">
    <property type="term" value="P:proteolysis"/>
    <property type="evidence" value="ECO:0007669"/>
    <property type="project" value="UniProtKB-KW"/>
</dbReference>
<dbReference type="HAMAP" id="MF_00161">
    <property type="entry name" value="LspA"/>
    <property type="match status" value="1"/>
</dbReference>
<dbReference type="InterPro" id="IPR001872">
    <property type="entry name" value="Peptidase_A8"/>
</dbReference>
<dbReference type="NCBIfam" id="TIGR00077">
    <property type="entry name" value="lspA"/>
    <property type="match status" value="1"/>
</dbReference>
<dbReference type="PANTHER" id="PTHR33695">
    <property type="entry name" value="LIPOPROTEIN SIGNAL PEPTIDASE"/>
    <property type="match status" value="1"/>
</dbReference>
<dbReference type="PANTHER" id="PTHR33695:SF1">
    <property type="entry name" value="LIPOPROTEIN SIGNAL PEPTIDASE"/>
    <property type="match status" value="1"/>
</dbReference>
<dbReference type="Pfam" id="PF01252">
    <property type="entry name" value="Peptidase_A8"/>
    <property type="match status" value="1"/>
</dbReference>
<dbReference type="PRINTS" id="PR00781">
    <property type="entry name" value="LIPOSIGPTASE"/>
</dbReference>
<dbReference type="PROSITE" id="PS00855">
    <property type="entry name" value="SPASE_II"/>
    <property type="match status" value="1"/>
</dbReference>
<keyword id="KW-0064">Aspartyl protease</keyword>
<keyword id="KW-0997">Cell inner membrane</keyword>
<keyword id="KW-1003">Cell membrane</keyword>
<keyword id="KW-0378">Hydrolase</keyword>
<keyword id="KW-0472">Membrane</keyword>
<keyword id="KW-0645">Protease</keyword>
<keyword id="KW-0812">Transmembrane</keyword>
<keyword id="KW-1133">Transmembrane helix</keyword>
<sequence>MTRPTHPNALIWLLLSIAIIALDQATKAWVLTSLPEYIPVPVIHGFWNWYRSYNTGAAFSFLSDAGGWQMWLFIALALGISGLLTFWLSRTPRREWRSALPYALIIGGGIGNVIDRFLHGHVVDFIQWYVGSYYWPSFNLADSAIVAGAIGIGLLSLFDSKHSPKTP</sequence>
<evidence type="ECO:0000255" key="1">
    <source>
        <dbReference type="HAMAP-Rule" id="MF_00161"/>
    </source>
</evidence>
<protein>
    <recommendedName>
        <fullName evidence="1">Lipoprotein signal peptidase</fullName>
        <ecNumber evidence="1">3.4.23.36</ecNumber>
    </recommendedName>
    <alternativeName>
        <fullName evidence="1">Prolipoprotein signal peptidase</fullName>
    </alternativeName>
    <alternativeName>
        <fullName evidence="1">Signal peptidase II</fullName>
        <shortName evidence="1">SPase II</shortName>
    </alternativeName>
</protein>
<accession>B2I6V1</accession>